<dbReference type="EMBL" id="CP000733">
    <property type="protein sequence ID" value="ABS77377.2"/>
    <property type="status" value="ALT_INIT"/>
    <property type="molecule type" value="Genomic_DNA"/>
</dbReference>
<dbReference type="RefSeq" id="WP_010958215.1">
    <property type="nucleotide sequence ID" value="NC_009727.1"/>
</dbReference>
<dbReference type="SMR" id="A9KBN6"/>
<dbReference type="KEGG" id="cbd:CBUD_0579"/>
<dbReference type="HOGENOM" id="CLU_087843_4_1_6"/>
<dbReference type="Proteomes" id="UP000008555">
    <property type="component" value="Chromosome"/>
</dbReference>
<dbReference type="GO" id="GO:0005829">
    <property type="term" value="C:cytosol"/>
    <property type="evidence" value="ECO:0007669"/>
    <property type="project" value="TreeGrafter"/>
</dbReference>
<dbReference type="GO" id="GO:0003723">
    <property type="term" value="F:RNA binding"/>
    <property type="evidence" value="ECO:0007669"/>
    <property type="project" value="UniProtKB-UniRule"/>
</dbReference>
<dbReference type="GO" id="GO:0006353">
    <property type="term" value="P:DNA-templated transcription termination"/>
    <property type="evidence" value="ECO:0007669"/>
    <property type="project" value="UniProtKB-UniRule"/>
</dbReference>
<dbReference type="GO" id="GO:0031564">
    <property type="term" value="P:transcription antitermination"/>
    <property type="evidence" value="ECO:0007669"/>
    <property type="project" value="UniProtKB-KW"/>
</dbReference>
<dbReference type="FunFam" id="1.10.940.10:FF:000001">
    <property type="entry name" value="Transcription antitermination factor NusB"/>
    <property type="match status" value="1"/>
</dbReference>
<dbReference type="Gene3D" id="1.10.940.10">
    <property type="entry name" value="NusB-like"/>
    <property type="match status" value="1"/>
</dbReference>
<dbReference type="HAMAP" id="MF_00073">
    <property type="entry name" value="NusB"/>
    <property type="match status" value="1"/>
</dbReference>
<dbReference type="InterPro" id="IPR035926">
    <property type="entry name" value="NusB-like_sf"/>
</dbReference>
<dbReference type="InterPro" id="IPR011605">
    <property type="entry name" value="NusB_fam"/>
</dbReference>
<dbReference type="InterPro" id="IPR006027">
    <property type="entry name" value="NusB_RsmB_TIM44"/>
</dbReference>
<dbReference type="NCBIfam" id="TIGR01951">
    <property type="entry name" value="nusB"/>
    <property type="match status" value="1"/>
</dbReference>
<dbReference type="PANTHER" id="PTHR11078:SF3">
    <property type="entry name" value="ANTITERMINATION NUSB DOMAIN-CONTAINING PROTEIN"/>
    <property type="match status" value="1"/>
</dbReference>
<dbReference type="PANTHER" id="PTHR11078">
    <property type="entry name" value="N UTILIZATION SUBSTANCE PROTEIN B-RELATED"/>
    <property type="match status" value="1"/>
</dbReference>
<dbReference type="Pfam" id="PF01029">
    <property type="entry name" value="NusB"/>
    <property type="match status" value="1"/>
</dbReference>
<dbReference type="SUPFAM" id="SSF48013">
    <property type="entry name" value="NusB-like"/>
    <property type="match status" value="1"/>
</dbReference>
<sequence length="138" mass="15873">MINKTRHNARRYALQALYQWFFCETKPDALISQFMEEHDLSDTDVAYFKEVVTGTIQHVAIIDELMTAHLDRKISALNPVELSVLRLSIYELLHRKEVPYKVVIDEALELVKEFGAEAGHKYVNAILDVLSSEIRKGV</sequence>
<comment type="function">
    <text evidence="1">Involved in transcription antitermination. Required for transcription of ribosomal RNA (rRNA) genes. Binds specifically to the boxA antiterminator sequence of the ribosomal RNA (rrn) operons.</text>
</comment>
<comment type="similarity">
    <text evidence="1">Belongs to the NusB family.</text>
</comment>
<comment type="sequence caution" evidence="2">
    <conflict type="erroneous initiation">
        <sequence resource="EMBL-CDS" id="ABS77377"/>
    </conflict>
</comment>
<organism>
    <name type="scientific">Coxiella burnetii (strain Dugway 5J108-111)</name>
    <dbReference type="NCBI Taxonomy" id="434922"/>
    <lineage>
        <taxon>Bacteria</taxon>
        <taxon>Pseudomonadati</taxon>
        <taxon>Pseudomonadota</taxon>
        <taxon>Gammaproteobacteria</taxon>
        <taxon>Legionellales</taxon>
        <taxon>Coxiellaceae</taxon>
        <taxon>Coxiella</taxon>
    </lineage>
</organism>
<reference key="1">
    <citation type="journal article" date="2009" name="Infect. Immun.">
        <title>Comparative genomics reveal extensive transposon-mediated genomic plasticity and diversity among potential effector proteins within the genus Coxiella.</title>
        <authorList>
            <person name="Beare P.A."/>
            <person name="Unsworth N."/>
            <person name="Andoh M."/>
            <person name="Voth D.E."/>
            <person name="Omsland A."/>
            <person name="Gilk S.D."/>
            <person name="Williams K.P."/>
            <person name="Sobral B.W."/>
            <person name="Kupko J.J. III"/>
            <person name="Porcella S.F."/>
            <person name="Samuel J.E."/>
            <person name="Heinzen R.A."/>
        </authorList>
    </citation>
    <scope>NUCLEOTIDE SEQUENCE [LARGE SCALE GENOMIC DNA]</scope>
    <source>
        <strain>Dugway 5J108-111</strain>
    </source>
</reference>
<feature type="chain" id="PRO_1000075184" description="Transcription antitermination protein NusB">
    <location>
        <begin position="1"/>
        <end position="138"/>
    </location>
</feature>
<protein>
    <recommendedName>
        <fullName evidence="1">Transcription antitermination protein NusB</fullName>
    </recommendedName>
    <alternativeName>
        <fullName evidence="1">Antitermination factor NusB</fullName>
    </alternativeName>
</protein>
<accession>A9KBN6</accession>
<gene>
    <name evidence="1" type="primary">nusB</name>
    <name type="ordered locus">CBUD_0579</name>
</gene>
<evidence type="ECO:0000255" key="1">
    <source>
        <dbReference type="HAMAP-Rule" id="MF_00073"/>
    </source>
</evidence>
<evidence type="ECO:0000305" key="2"/>
<name>NUSB_COXBN</name>
<proteinExistence type="inferred from homology"/>
<keyword id="KW-0694">RNA-binding</keyword>
<keyword id="KW-0804">Transcription</keyword>
<keyword id="KW-0889">Transcription antitermination</keyword>
<keyword id="KW-0805">Transcription regulation</keyword>